<organism>
    <name type="scientific">Rattus norvegicus</name>
    <name type="common">Rat</name>
    <dbReference type="NCBI Taxonomy" id="10116"/>
    <lineage>
        <taxon>Eukaryota</taxon>
        <taxon>Metazoa</taxon>
        <taxon>Chordata</taxon>
        <taxon>Craniata</taxon>
        <taxon>Vertebrata</taxon>
        <taxon>Euteleostomi</taxon>
        <taxon>Mammalia</taxon>
        <taxon>Eutheria</taxon>
        <taxon>Euarchontoglires</taxon>
        <taxon>Glires</taxon>
        <taxon>Rodentia</taxon>
        <taxon>Myomorpha</taxon>
        <taxon>Muroidea</taxon>
        <taxon>Muridae</taxon>
        <taxon>Murinae</taxon>
        <taxon>Rattus</taxon>
    </lineage>
</organism>
<gene>
    <name type="primary">Grb2</name>
    <name type="synonym">Ash</name>
</gene>
<proteinExistence type="evidence at protein level"/>
<comment type="function">
    <text evidence="2 7">Non-enzymatic adapter protein that plays a pivotal role in precisely regulated signaling cascades from cell surface receptors to cellular responses, including signaling transduction and gene expression (PubMed:7775428). Thus, participates in many biological processes including regulation of innate and adaptive immunity, autophagy, DNA repair or necroptosis. Controls signaling complexes at the T-cell antigen receptor to facilitate the activation, differentiation, and function of T-cells. Mechanistically, engagement of the TCR leads to phosphorylation of the adapter protein LAT, which serves as docking site for GRB2. In turn, GRB2 establishes a a connection with SOS1 that acts as a guanine nucleotide exchange factor and serves as a critical regulator of KRAS/RAF1 leading to MAPKs translocation to the nucleus and activation. Also plays a role in B-cell activation by amplifying Ca(2+) mobilization and activation of the ERK MAP kinase pathway upon recruitment to the phosphorylated B-cell antigen receptor (BCR). Plays a role in switching between autophagy and programmed necrosis upstream of EGFR by interacting with components of necrosomes including RIPK1 and with autophagy regulators SQSTM1 and BECN1. Regulates miRNA biogenesis by forming a functional ternary complex with AGO2 and DICER1. Functions in the replication stress response by protecting DNA at stalled replication forks from MRE11-mediated degradation. Mechanistically, inhibits RAD51 ATPase activity to stabilize RAD51 on stalled replication forks. Additionally, directly recruits and later releases MRE11 at DNA damage sites during the homology-directed repair (HDR) process.</text>
</comment>
<comment type="subunit">
    <text evidence="2 3">Homodimer. Associates (via SH2 domain) with activated EGF and PDGF receptors (tyrosine phosphorylated) (By similarity). Interacts with PDGFRA (tyrosine phosphorylated); the interaction may be indirect (By similarity). Also associates to other cellular Tyr-phosphorylated proteins such as SIT1, IRS1, IRS2, IRS4, SHC and LNK; probably via the concerted action of both its SH2 and SH3 domains. It also seems to interact with RAS in the signaling pathway leading to DNA synthesis. Interacts with SOS1. Forms a complex with MUC1 and SOS1, through interaction of the SH3 domains with SOS1 and the SH2 domain with phosphorylated MUC1. Interacts with phosphorylated MET (By similarity). Interacts with phosphorylated TOM1L1 (By similarity). Interacts with the phosphorylated C-terminus of SH2B2. Interacts with phosphorylated SIT1, LAX1, LAT, LAT2 and LIME1 upon TCR and/or BCR activation. Interacts with NISCH, PTPNS1 and REPS2 (By similarity). Interacts with syntrophin SNTA1 (By similarity). Interacts (via SH3 domains) with REPS1 (By similarity). Interacts (via SH3 domains) with PIK3C2B. Interacts with CBL and CBLB (By similarity). Interacts with AJUBA and CLNK (By similarity). Interacts (via SH2 domain) with TEK/TIE2 (tyrosine phosphorylated) (By similarity). Interacts with SHB, INPP5D/SHIP1, SKAP1 and SKAP2 (By similarity). Interacts with PTPN11 (By similarity). Interacts with PRNP (By similarity). Interacts with RALGPS1. Interacts with HCST (By similarity). Interacts with KDR (By similarity). Interacts with FLT1 (tyrosine-phosphorylated) (By similarity). Interacts with GAPT and PTPRE. Interacts (via SH2 domain) with KIF26A. Interacts (via SH3 2) with GAB2. Interacts with ADAM15 (By similarity). Interacts with THEMIS2 (By similarity). Interacts (via SH2 domain) with AXL (phosphorylated). Interacts (via SH2 domain) with KIT (phosphorylated). Interacts with PTPRJ and BCR. Interacts with PTPN23. Interacts with FLT4 (tyrosine phosphorylated). Interacts with EPHB1 and SHC1; activates the MAPK/ERK cascade to regulate cell migration. Part of a complex including TNK2, GRB2, LTK and one receptor tyrosine kinase (RTK) such as AXL and PDGFRL, in which GRB2 promotes RTK recruitment by TNK2. Interacts (via SH2 domain) with CSF1R (tyrosine phosphorylated). Interacts with ERBB4. Interacts with NTRK1 (phosphorylated upon ligand-binding). Interacts with PTK2/FAK1 (tyrosine phosphorylated). Interacts with PTK2B/PYK2 (tyrosine phosphorylated). Interacts (via SH3 domains) with GAREM1 isoform 1 (via proline-rich domain and tyrosine phosphorylated); the interaction occurs upon EGF stimulation (By similarity). Interacts with DAB2 (By similarity). Interacts with TESPA1 (By similarity). Interacts with PLCG1, LAT and THEMIS upon TCR activation in thymocytes; the association is weaker in the absence of TESPA1 (By similarity). Interacts with CD28 (By similarity). Interacts with RAB13; may recruit RAB13 to the leading edge of migrating endothelial cells where it can activate RHOA (By similarity). Interacts with ASAP3 (phosphorylated form) (By similarity). Interacts (via SH2 domain) with PTPRH (phosphorylated form) (By similarity). Interacts with PTPRO (phosphorylated form) (By similarity). Interacts with PTPRB (phosphorylated form) (By similarity). Interacts (via SH3 domain 2) with PRR14 (via proline-rich region). Interacts with FCRL6 (tyrosine phosphorylated form). Interacts with RHEX (via tyrosine-phosphorylated form). Interacts with DENND2B. Interacts with SPRY2 (By similarity). Interacts with LRRC8A (By similarity). Interacts with PEAK1 (By similarity). Interacts with FCRL1 (By similarity). Interacts with RAD51; the interaction inhibits RAD51 ATPase to stabilize RAD51-DNA complex at stalled replication forks. Interacts with MRE11; this interaction recruits MRE11 to the DNA damage sites. Interacts with RIPK1 ans SQSTM1; these interactions play a critical role in regulating programmed necrosis (By similarity). Interacts with AGO2; this interaction is important for the formation of a ternary complex containing GRB2, AGO2 and DICER1 (By similarity). Interacts with TIGIT; this interaction inhibits PI3K and MAPK signaling cascades (By similarity). Interacts with CD226; this interaction leads to activation of VAV1, PI3K and PLCG1 (By similarity).</text>
</comment>
<comment type="interaction">
    <interactant intactId="EBI-401775">
        <id>P62994</id>
    </interactant>
    <interactant intactId="EBI-80070">
        <id>P21575</id>
        <label>Dnm1</label>
    </interactant>
    <organismsDiffer>false</organismsDiffer>
    <experiments>3</experiments>
</comment>
<comment type="interaction">
    <interactant intactId="EBI-401775">
        <id>P62994</id>
    </interactant>
    <interactant intactId="EBI-976667">
        <id>P35739</id>
        <label>Ntrk1</label>
    </interactant>
    <organismsDiffer>false</organismsDiffer>
    <experiments>6</experiments>
</comment>
<comment type="interaction">
    <interactant intactId="EBI-401775">
        <id>P62994</id>
    </interactant>
    <interactant intactId="EBI-2622029">
        <id>P18545</id>
        <label>PDE6G</label>
    </interactant>
    <organismsDiffer>true</organismsDiffer>
    <experiments>2</experiments>
</comment>
<comment type="interaction">
    <interactant intactId="EBI-401775">
        <id>P62994</id>
    </interactant>
    <interactant intactId="EBI-968788">
        <id>P18031</id>
        <label>PTPN1</label>
    </interactant>
    <organismsDiffer>true</organismsDiffer>
    <experiments>3</experiments>
</comment>
<comment type="subcellular location">
    <subcellularLocation>
        <location evidence="2">Nucleus</location>
    </subcellularLocation>
    <subcellularLocation>
        <location evidence="2">Cytoplasm</location>
    </subcellularLocation>
    <subcellularLocation>
        <location evidence="2">Endosome</location>
    </subcellularLocation>
    <subcellularLocation>
        <location evidence="3">Golgi apparatus</location>
    </subcellularLocation>
</comment>
<comment type="alternative products">
    <event type="alternative splicing"/>
    <isoform>
        <id>P62994-1</id>
        <id>P29354-1</id>
        <name>1</name>
        <name>Ash-L</name>
        <sequence type="displayed"/>
    </isoform>
    <isoform>
        <id>P62994-2</id>
        <id>P29354-3</id>
        <name>2</name>
        <name>Ash-M</name>
        <sequence type="described" ref="VSP_001840"/>
    </isoform>
    <isoform>
        <id>P62994-3</id>
        <id>P29354-4</id>
        <name>3</name>
        <name>Ash-S</name>
        <sequence type="described" ref="VSP_001838"/>
    </isoform>
    <text>Additional isoforms seem to exist.</text>
</comment>
<comment type="tissue specificity">
    <text evidence="6">Wide tissue distribution.</text>
</comment>
<comment type="domain">
    <text evidence="1">The SH3 domains mediate interaction with RALGPS1 and SHB.</text>
</comment>
<comment type="PTM">
    <text evidence="2">Phosphorylation of Tyr-209 in the C-terminal SH3 domain reduces its binding to SOS1.</text>
</comment>
<comment type="PTM">
    <text evidence="2">Ubiquitinated by RNF173, leading to proteasomal degradation and inhibition of the RAF/MEK/ERK pathway. In the nucleus, polyubiquitinated by RBBP6 at Lys-109 at DNA damage sites.</text>
</comment>
<comment type="similarity">
    <text evidence="9">Belongs to the GRB2/sem-5/DRK family.</text>
</comment>
<evidence type="ECO:0000250" key="1"/>
<evidence type="ECO:0000250" key="2">
    <source>
        <dbReference type="UniProtKB" id="P62993"/>
    </source>
</evidence>
<evidence type="ECO:0000250" key="3">
    <source>
        <dbReference type="UniProtKB" id="Q60631"/>
    </source>
</evidence>
<evidence type="ECO:0000255" key="4">
    <source>
        <dbReference type="PROSITE-ProRule" id="PRU00191"/>
    </source>
</evidence>
<evidence type="ECO:0000255" key="5">
    <source>
        <dbReference type="PROSITE-ProRule" id="PRU00192"/>
    </source>
</evidence>
<evidence type="ECO:0000269" key="6">
    <source>
    </source>
</evidence>
<evidence type="ECO:0000269" key="7">
    <source>
    </source>
</evidence>
<evidence type="ECO:0000303" key="8">
    <source>
    </source>
</evidence>
<evidence type="ECO:0000305" key="9"/>
<name>GRB2_RAT</name>
<sequence length="217" mass="25206">MEAIAKYDFKATADDELSFKRGDILKVLNEECDQNWYKAELNGKDGFIPKNYIEMKPHPWFFGKIPRAKAEEMLSKQRHDGAFLIRESESAPGDFSLSVKFGNDVQHFKVLRDGAGKYFLWVVKFNSLNELVDYHRSTSVSRNQQIFLRDIEQVPQQPTYVQALFDFDPQEDGELGFRRGDFIHVMDNSDPNWWKGACHGQTGMFPRNYVTPVNRNV</sequence>
<reference key="1">
    <citation type="journal article" date="1992" name="Proc. Natl. Acad. Sci. U.S.A.">
        <title>Cloning of ASH, a ubiquitous protein composed of one Src homology region (SH) 2 and two SH3 domains, from human and rat cDNA libraries.</title>
        <authorList>
            <person name="Matuoka K."/>
            <person name="Yamakawa A."/>
            <person name="Shibata M."/>
            <person name="Takenawa T."/>
        </authorList>
    </citation>
    <scope>NUCLEOTIDE SEQUENCE [MRNA] (ISOFORM 1)</scope>
    <scope>TISSUE SPECIFICITY</scope>
    <source>
        <strain>Fischer 344</strain>
        <tissue>Brain</tissue>
    </source>
</reference>
<reference key="2">
    <citation type="journal article" date="1995" name="J. Biol. Chem.">
        <title>Splicing isoforms of rat Ash/Grb2. Isolation and characterization of the cDNA and genomic DNA clones and implications for the physiological roles of the isoforms.</title>
        <authorList>
            <person name="Watanabe K."/>
            <person name="Fukuchi T."/>
            <person name="Hosoya H."/>
            <person name="Shirasawa T."/>
            <person name="Matsuoka K."/>
            <person name="Miki H."/>
            <person name="Takenawa T."/>
        </authorList>
    </citation>
    <scope>NUCLEOTIDE SEQUENCE [MRNA] (ISOFORMS 2 AND 3)</scope>
    <scope>FUNCTION</scope>
    <source>
        <strain>Wistar</strain>
        <tissue>Brain</tissue>
    </source>
</reference>
<reference key="3">
    <citation type="journal article" date="2004" name="Genome Res.">
        <title>The status, quality, and expansion of the NIH full-length cDNA project: the Mammalian Gene Collection (MGC).</title>
        <authorList>
            <consortium name="The MGC Project Team"/>
        </authorList>
    </citation>
    <scope>NUCLEOTIDE SEQUENCE [LARGE SCALE MRNA] (ISOFORM 1)</scope>
    <source>
        <tissue>Thymus</tissue>
    </source>
</reference>
<reference key="4">
    <citation type="submission" date="2007-04" db="UniProtKB">
        <authorList>
            <person name="Lubec G."/>
            <person name="Afjehi-Sadat L."/>
            <person name="Chen W.-Q."/>
        </authorList>
    </citation>
    <scope>PROTEIN SEQUENCE OF 11-21; 77-86; 101-109; 125-136; 143-149 AND 208-215</scope>
    <scope>IDENTIFICATION BY MASS SPECTROMETRY</scope>
    <source>
        <strain>Sprague-Dawley</strain>
        <tissue>Hippocampus</tissue>
        <tissue>Spinal cord</tissue>
    </source>
</reference>
<reference key="5">
    <citation type="journal article" date="1993" name="EMBO J.">
        <title>Mutation of Tyr697, a GRB2-binding site, and Tyr721, a PI 3-kinase binding site, abrogates signal transduction by the murine CSF-1 receptor expressed in Rat-2 fibroblasts.</title>
        <authorList>
            <person name="van der Geer P."/>
            <person name="Hunter T."/>
        </authorList>
    </citation>
    <scope>INTERACTION WITH CSF1R</scope>
</reference>
<reference key="6">
    <citation type="journal article" date="1993" name="J. Biol. Chem.">
        <title>Insulin stimulates association of insulin receptor substrate-1 with the protein abundant Src homology/growth factor receptor-bound protein 2.</title>
        <authorList>
            <person name="Tobe K."/>
            <person name="Matuoka K."/>
            <person name="Tamemoto H."/>
            <person name="Ueki K."/>
            <person name="Kaburagi Y."/>
            <person name="Asai S."/>
            <person name="Noguchi T."/>
            <person name="Matsuda M."/>
            <person name="Tanaka S."/>
            <person name="Hattori S."/>
            <person name="Fukui Y."/>
            <person name="Akanuma Y."/>
            <person name="Yazaki Y."/>
            <person name="Takenawa T."/>
            <person name="Kadowaki T."/>
        </authorList>
    </citation>
    <scope>INTERACTION WITH IRS1</scope>
</reference>
<feature type="chain" id="PRO_0000088201" description="Growth factor receptor-bound protein 2">
    <location>
        <begin position="1"/>
        <end position="217"/>
    </location>
</feature>
<feature type="domain" description="SH3 1" evidence="5">
    <location>
        <begin position="1"/>
        <end position="58"/>
    </location>
</feature>
<feature type="domain" description="SH2" evidence="4">
    <location>
        <begin position="60"/>
        <end position="152"/>
    </location>
</feature>
<feature type="domain" description="SH3 2" evidence="5">
    <location>
        <begin position="156"/>
        <end position="215"/>
    </location>
</feature>
<feature type="modified residue" description="N-acetylmethionine" evidence="2">
    <location>
        <position position="1"/>
    </location>
</feature>
<feature type="modified residue" description="N6-acetyllysine" evidence="2">
    <location>
        <position position="6"/>
    </location>
</feature>
<feature type="modified residue" description="N6-acetyllysine" evidence="2">
    <location>
        <position position="50"/>
    </location>
</feature>
<feature type="modified residue" description="N6-acetyllysine" evidence="2">
    <location>
        <position position="109"/>
    </location>
</feature>
<feature type="modified residue" description="Phosphotyrosine" evidence="2">
    <location>
        <position position="209"/>
    </location>
</feature>
<feature type="modified residue" description="Phosphothreonine" evidence="2">
    <location>
        <position position="211"/>
    </location>
</feature>
<feature type="cross-link" description="Glycyl lysine isopeptide (Lys-Gly) (interchain with G-Cter in ubiquitin)" evidence="2">
    <location>
        <position position="109"/>
    </location>
</feature>
<feature type="splice variant" id="VSP_001838" description="In isoform 3." evidence="8">
    <location>
        <begin position="60"/>
        <end position="217"/>
    </location>
</feature>
<feature type="splice variant" id="VSP_001840" description="In isoform 2." evidence="8">
    <location>
        <begin position="157"/>
        <end position="170"/>
    </location>
</feature>
<protein>
    <recommendedName>
        <fullName>Growth factor receptor-bound protein 2</fullName>
    </recommendedName>
    <alternativeName>
        <fullName>Adapter protein GRB2</fullName>
    </alternativeName>
    <alternativeName>
        <fullName>Protein Ash</fullName>
    </alternativeName>
    <alternativeName>
        <fullName>SH2/SH3 adapter GRB2</fullName>
    </alternativeName>
</protein>
<accession>P62994</accession>
<accession>P29354</accession>
<accession>Q14450</accession>
<accession>Q5BKA7</accession>
<accession>Q63057</accession>
<accession>Q63059</accession>
<dbReference type="EMBL" id="X62853">
    <property type="protein sequence ID" value="CAA44665.1"/>
    <property type="molecule type" value="mRNA"/>
</dbReference>
<dbReference type="EMBL" id="D49846">
    <property type="protein sequence ID" value="BAA08645.1"/>
    <property type="molecule type" value="mRNA"/>
</dbReference>
<dbReference type="EMBL" id="D49847">
    <property type="protein sequence ID" value="BAA08646.1"/>
    <property type="molecule type" value="mRNA"/>
</dbReference>
<dbReference type="EMBL" id="BC091144">
    <property type="protein sequence ID" value="AAH91144.1"/>
    <property type="molecule type" value="mRNA"/>
</dbReference>
<dbReference type="PIR" id="S26050">
    <property type="entry name" value="S26050"/>
</dbReference>
<dbReference type="RefSeq" id="NP_110473.2">
    <molecule id="P62994-1"/>
    <property type="nucleotide sequence ID" value="NM_030846.2"/>
</dbReference>
<dbReference type="BMRB" id="P62994"/>
<dbReference type="SMR" id="P62994"/>
<dbReference type="BioGRID" id="249501">
    <property type="interactions" value="13"/>
</dbReference>
<dbReference type="CORUM" id="P62994"/>
<dbReference type="FunCoup" id="P62994">
    <property type="interactions" value="4171"/>
</dbReference>
<dbReference type="IntAct" id="P62994">
    <property type="interactions" value="27"/>
</dbReference>
<dbReference type="MINT" id="P62994"/>
<dbReference type="STRING" id="10116.ENSRNOP00000005347"/>
<dbReference type="GlyGen" id="P62994">
    <property type="glycosylation" value="1 site"/>
</dbReference>
<dbReference type="iPTMnet" id="P62994"/>
<dbReference type="PhosphoSitePlus" id="P62994"/>
<dbReference type="SwissPalm" id="P62994"/>
<dbReference type="jPOST" id="P62994"/>
<dbReference type="PaxDb" id="10116-ENSRNOP00000005347"/>
<dbReference type="Ensembl" id="ENSRNOT00000095127.1">
    <molecule id="P62994-2"/>
    <property type="protein sequence ID" value="ENSRNOP00000080275.1"/>
    <property type="gene ID" value="ENSRNOG00000003990.7"/>
</dbReference>
<dbReference type="GeneID" id="81504"/>
<dbReference type="KEGG" id="rno:81504"/>
<dbReference type="AGR" id="RGD:619758"/>
<dbReference type="CTD" id="2885"/>
<dbReference type="RGD" id="619758">
    <property type="gene designation" value="Grb2"/>
</dbReference>
<dbReference type="VEuPathDB" id="HostDB:ENSRNOG00000003990"/>
<dbReference type="eggNOG" id="KOG3601">
    <property type="taxonomic scope" value="Eukaryota"/>
</dbReference>
<dbReference type="GeneTree" id="ENSGT00940000155738"/>
<dbReference type="HOGENOM" id="CLU_073617_1_0_1"/>
<dbReference type="InParanoid" id="P62994"/>
<dbReference type="OrthoDB" id="10255964at2759"/>
<dbReference type="PhylomeDB" id="P62994"/>
<dbReference type="TreeFam" id="TF354288"/>
<dbReference type="Reactome" id="R-RNO-109704">
    <property type="pathway name" value="PI3K Cascade"/>
</dbReference>
<dbReference type="Reactome" id="R-RNO-112412">
    <property type="pathway name" value="SOS-mediated signalling"/>
</dbReference>
<dbReference type="Reactome" id="R-RNO-1250347">
    <property type="pathway name" value="SHC1 events in ERBB4 signaling"/>
</dbReference>
<dbReference type="Reactome" id="R-RNO-1257604">
    <property type="pathway name" value="PIP3 activates AKT signaling"/>
</dbReference>
<dbReference type="Reactome" id="R-RNO-1295596">
    <property type="pathway name" value="Spry regulation of FGF signaling"/>
</dbReference>
<dbReference type="Reactome" id="R-RNO-1433557">
    <property type="pathway name" value="Signaling by SCF-KIT"/>
</dbReference>
<dbReference type="Reactome" id="R-RNO-1433559">
    <property type="pathway name" value="Regulation of KIT signaling"/>
</dbReference>
<dbReference type="Reactome" id="R-RNO-167044">
    <property type="pathway name" value="Signalling to RAS"/>
</dbReference>
<dbReference type="Reactome" id="R-RNO-179812">
    <property type="pathway name" value="GRB2 events in EGFR signaling"/>
</dbReference>
<dbReference type="Reactome" id="R-RNO-180292">
    <property type="pathway name" value="GAB1 signalosome"/>
</dbReference>
<dbReference type="Reactome" id="R-RNO-180336">
    <property type="pathway name" value="SHC1 events in EGFR signaling"/>
</dbReference>
<dbReference type="Reactome" id="R-RNO-182971">
    <property type="pathway name" value="EGFR downregulation"/>
</dbReference>
<dbReference type="Reactome" id="R-RNO-186763">
    <property type="pathway name" value="Downstream signal transduction"/>
</dbReference>
<dbReference type="Reactome" id="R-RNO-1963640">
    <property type="pathway name" value="GRB2 events in ERBB2 signaling"/>
</dbReference>
<dbReference type="Reactome" id="R-RNO-1963642">
    <property type="pathway name" value="PI3K events in ERBB2 signaling"/>
</dbReference>
<dbReference type="Reactome" id="R-RNO-2029482">
    <property type="pathway name" value="Regulation of actin dynamics for phagocytic cup formation"/>
</dbReference>
<dbReference type="Reactome" id="R-RNO-210993">
    <property type="pathway name" value="Tie2 Signaling"/>
</dbReference>
<dbReference type="Reactome" id="R-RNO-2179392">
    <property type="pathway name" value="EGFR Transactivation by Gastrin"/>
</dbReference>
<dbReference type="Reactome" id="R-RNO-2424491">
    <property type="pathway name" value="DAP12 signaling"/>
</dbReference>
<dbReference type="Reactome" id="R-RNO-2428933">
    <property type="pathway name" value="SHC-related events triggered by IGF1R"/>
</dbReference>
<dbReference type="Reactome" id="R-RNO-2730905">
    <property type="pathway name" value="Role of LAT2/NTAL/LAB on calcium mobilization"/>
</dbReference>
<dbReference type="Reactome" id="R-RNO-2871796">
    <property type="pathway name" value="FCERI mediated MAPK activation"/>
</dbReference>
<dbReference type="Reactome" id="R-RNO-2871809">
    <property type="pathway name" value="FCERI mediated Ca+2 mobilization"/>
</dbReference>
<dbReference type="Reactome" id="R-RNO-354194">
    <property type="pathway name" value="GRB2:SOS provides linkage to MAPK signaling for Integrins"/>
</dbReference>
<dbReference type="Reactome" id="R-RNO-375165">
    <property type="pathway name" value="NCAM signaling for neurite out-growth"/>
</dbReference>
<dbReference type="Reactome" id="R-RNO-389359">
    <property type="pathway name" value="CD28 dependent Vav1 pathway"/>
</dbReference>
<dbReference type="Reactome" id="R-RNO-391160">
    <property type="pathway name" value="Signal regulatory protein family interactions"/>
</dbReference>
<dbReference type="Reactome" id="R-RNO-5654688">
    <property type="pathway name" value="SHC-mediated cascade:FGFR1"/>
</dbReference>
<dbReference type="Reactome" id="R-RNO-5654689">
    <property type="pathway name" value="PI-3K cascade:FGFR1"/>
</dbReference>
<dbReference type="Reactome" id="R-RNO-5654693">
    <property type="pathway name" value="FRS-mediated FGFR1 signaling"/>
</dbReference>
<dbReference type="Reactome" id="R-RNO-5654695">
    <property type="pathway name" value="PI-3K cascade:FGFR2"/>
</dbReference>
<dbReference type="Reactome" id="R-RNO-5654699">
    <property type="pathway name" value="SHC-mediated cascade:FGFR2"/>
</dbReference>
<dbReference type="Reactome" id="R-RNO-5654700">
    <property type="pathway name" value="FRS-mediated FGFR2 signaling"/>
</dbReference>
<dbReference type="Reactome" id="R-RNO-5654704">
    <property type="pathway name" value="SHC-mediated cascade:FGFR3"/>
</dbReference>
<dbReference type="Reactome" id="R-RNO-5654706">
    <property type="pathway name" value="FRS-mediated FGFR3 signaling"/>
</dbReference>
<dbReference type="Reactome" id="R-RNO-5654710">
    <property type="pathway name" value="PI-3K cascade:FGFR3"/>
</dbReference>
<dbReference type="Reactome" id="R-RNO-5654712">
    <property type="pathway name" value="FRS-mediated FGFR4 signaling"/>
</dbReference>
<dbReference type="Reactome" id="R-RNO-5654719">
    <property type="pathway name" value="SHC-mediated cascade:FGFR4"/>
</dbReference>
<dbReference type="Reactome" id="R-RNO-5654720">
    <property type="pathway name" value="PI-3K cascade:FGFR4"/>
</dbReference>
<dbReference type="Reactome" id="R-RNO-5654726">
    <property type="pathway name" value="Negative regulation of FGFR1 signaling"/>
</dbReference>
<dbReference type="Reactome" id="R-RNO-5654727">
    <property type="pathway name" value="Negative regulation of FGFR2 signaling"/>
</dbReference>
<dbReference type="Reactome" id="R-RNO-5654732">
    <property type="pathway name" value="Negative regulation of FGFR3 signaling"/>
</dbReference>
<dbReference type="Reactome" id="R-RNO-5654733">
    <property type="pathway name" value="Negative regulation of FGFR4 signaling"/>
</dbReference>
<dbReference type="Reactome" id="R-RNO-5663213">
    <property type="pathway name" value="RHO GTPases Activate WASPs and WAVEs"/>
</dbReference>
<dbReference type="Reactome" id="R-RNO-5673001">
    <property type="pathway name" value="RAF/MAP kinase cascade"/>
</dbReference>
<dbReference type="Reactome" id="R-RNO-6807004">
    <property type="pathway name" value="Negative regulation of MET activity"/>
</dbReference>
<dbReference type="Reactome" id="R-RNO-6811558">
    <property type="pathway name" value="PI5P, PP2A and IER3 Regulate PI3K/AKT Signaling"/>
</dbReference>
<dbReference type="Reactome" id="R-RNO-74749">
    <property type="pathway name" value="Signal attenuation"/>
</dbReference>
<dbReference type="Reactome" id="R-RNO-74751">
    <property type="pathway name" value="Insulin receptor signalling cascade"/>
</dbReference>
<dbReference type="Reactome" id="R-RNO-8851805">
    <property type="pathway name" value="MET activates RAS signaling"/>
</dbReference>
<dbReference type="Reactome" id="R-RNO-8851907">
    <property type="pathway name" value="MET activates PI3K/AKT signaling"/>
</dbReference>
<dbReference type="Reactome" id="R-RNO-8853659">
    <property type="pathway name" value="RET signaling"/>
</dbReference>
<dbReference type="Reactome" id="R-RNO-8856825">
    <property type="pathway name" value="Cargo recognition for clathrin-mediated endocytosis"/>
</dbReference>
<dbReference type="Reactome" id="R-RNO-8856828">
    <property type="pathway name" value="Clathrin-mediated endocytosis"/>
</dbReference>
<dbReference type="Reactome" id="R-RNO-8865999">
    <property type="pathway name" value="MET activates PTPN11"/>
</dbReference>
<dbReference type="Reactome" id="R-RNO-8875555">
    <property type="pathway name" value="MET activates RAP1 and RAC1"/>
</dbReference>
<dbReference type="Reactome" id="R-RNO-8875656">
    <property type="pathway name" value="MET receptor recycling"/>
</dbReference>
<dbReference type="Reactome" id="R-RNO-8983432">
    <property type="pathway name" value="Interleukin-15 signaling"/>
</dbReference>
<dbReference type="Reactome" id="R-RNO-9013420">
    <property type="pathway name" value="RHOU GTPase cycle"/>
</dbReference>
<dbReference type="Reactome" id="R-RNO-9027284">
    <property type="pathway name" value="Erythropoietin activates RAS"/>
</dbReference>
<dbReference type="Reactome" id="R-RNO-9028731">
    <property type="pathway name" value="Activated NTRK2 signals through FRS2 and FRS3"/>
</dbReference>
<dbReference type="Reactome" id="R-RNO-912526">
    <property type="pathway name" value="Interleukin receptor SHC signaling"/>
</dbReference>
<dbReference type="Reactome" id="R-RNO-912631">
    <property type="pathway name" value="Regulation of signaling by CBL"/>
</dbReference>
<dbReference type="Reactome" id="R-RNO-9607240">
    <property type="pathway name" value="FLT3 Signaling"/>
</dbReference>
<dbReference type="Reactome" id="R-RNO-9674555">
    <property type="pathway name" value="Signaling by CSF3 (G-CSF)"/>
</dbReference>
<dbReference type="Reactome" id="R-RNO-983695">
    <property type="pathway name" value="Antigen activates B Cell Receptor (BCR) leading to generation of second messengers"/>
</dbReference>
<dbReference type="Reactome" id="R-RNO-9842663">
    <property type="pathway name" value="Signaling by LTK"/>
</dbReference>
<dbReference type="Reactome" id="R-RNO-9927353">
    <property type="pathway name" value="Co-inhibition by BTLA"/>
</dbReference>
<dbReference type="PRO" id="PR:P62994"/>
<dbReference type="Proteomes" id="UP000002494">
    <property type="component" value="Chromosome 10"/>
</dbReference>
<dbReference type="Bgee" id="ENSRNOG00000003990">
    <property type="expression patterns" value="Expressed in spleen and 20 other cell types or tissues"/>
</dbReference>
<dbReference type="GO" id="GO:0005938">
    <property type="term" value="C:cell cortex"/>
    <property type="evidence" value="ECO:0000266"/>
    <property type="project" value="RGD"/>
</dbReference>
<dbReference type="GO" id="GO:0005911">
    <property type="term" value="C:cell-cell junction"/>
    <property type="evidence" value="ECO:0000266"/>
    <property type="project" value="RGD"/>
</dbReference>
<dbReference type="GO" id="GO:0008180">
    <property type="term" value="C:COP9 signalosome"/>
    <property type="evidence" value="ECO:0000250"/>
    <property type="project" value="UniProtKB"/>
</dbReference>
<dbReference type="GO" id="GO:0005737">
    <property type="term" value="C:cytoplasm"/>
    <property type="evidence" value="ECO:0000250"/>
    <property type="project" value="UniProtKB"/>
</dbReference>
<dbReference type="GO" id="GO:0005829">
    <property type="term" value="C:cytosol"/>
    <property type="evidence" value="ECO:0000304"/>
    <property type="project" value="Reactome"/>
</dbReference>
<dbReference type="GO" id="GO:0005768">
    <property type="term" value="C:endosome"/>
    <property type="evidence" value="ECO:0000250"/>
    <property type="project" value="UniProtKB"/>
</dbReference>
<dbReference type="GO" id="GO:0005794">
    <property type="term" value="C:Golgi apparatus"/>
    <property type="evidence" value="ECO:0007669"/>
    <property type="project" value="UniProtKB-SubCell"/>
</dbReference>
<dbReference type="GO" id="GO:0070436">
    <property type="term" value="C:Grb2-EGFR complex"/>
    <property type="evidence" value="ECO:0000266"/>
    <property type="project" value="RGD"/>
</dbReference>
<dbReference type="GO" id="GO:0016020">
    <property type="term" value="C:membrane"/>
    <property type="evidence" value="ECO:0000266"/>
    <property type="project" value="RGD"/>
</dbReference>
<dbReference type="GO" id="GO:0005654">
    <property type="term" value="C:nucleoplasm"/>
    <property type="evidence" value="ECO:0000318"/>
    <property type="project" value="GO_Central"/>
</dbReference>
<dbReference type="GO" id="GO:0005634">
    <property type="term" value="C:nucleus"/>
    <property type="evidence" value="ECO:0000250"/>
    <property type="project" value="UniProtKB"/>
</dbReference>
<dbReference type="GO" id="GO:0005886">
    <property type="term" value="C:plasma membrane"/>
    <property type="evidence" value="ECO:0000266"/>
    <property type="project" value="RGD"/>
</dbReference>
<dbReference type="GO" id="GO:0098793">
    <property type="term" value="C:presynapse"/>
    <property type="evidence" value="ECO:0000314"/>
    <property type="project" value="SynGO"/>
</dbReference>
<dbReference type="GO" id="GO:0032991">
    <property type="term" value="C:protein-containing complex"/>
    <property type="evidence" value="ECO:0000314"/>
    <property type="project" value="RGD"/>
</dbReference>
<dbReference type="GO" id="GO:0012506">
    <property type="term" value="C:vesicle membrane"/>
    <property type="evidence" value="ECO:0000266"/>
    <property type="project" value="RGD"/>
</dbReference>
<dbReference type="GO" id="GO:0019899">
    <property type="term" value="F:enzyme binding"/>
    <property type="evidence" value="ECO:0000353"/>
    <property type="project" value="RGD"/>
</dbReference>
<dbReference type="GO" id="GO:0046875">
    <property type="term" value="F:ephrin receptor binding"/>
    <property type="evidence" value="ECO:0000266"/>
    <property type="project" value="RGD"/>
</dbReference>
<dbReference type="GO" id="GO:0005154">
    <property type="term" value="F:epidermal growth factor receptor binding"/>
    <property type="evidence" value="ECO:0000353"/>
    <property type="project" value="RGD"/>
</dbReference>
<dbReference type="GO" id="GO:0005091">
    <property type="term" value="F:guanyl-nucleotide exchange factor adaptor activity"/>
    <property type="evidence" value="ECO:0000266"/>
    <property type="project" value="RGD"/>
</dbReference>
<dbReference type="GO" id="GO:0042802">
    <property type="term" value="F:identical protein binding"/>
    <property type="evidence" value="ECO:0000266"/>
    <property type="project" value="RGD"/>
</dbReference>
<dbReference type="GO" id="GO:0043560">
    <property type="term" value="F:insulin receptor substrate binding"/>
    <property type="evidence" value="ECO:0000353"/>
    <property type="project" value="RGD"/>
</dbReference>
<dbReference type="GO" id="GO:0005168">
    <property type="term" value="F:neurotrophin TRKA receptor binding"/>
    <property type="evidence" value="ECO:0000266"/>
    <property type="project" value="RGD"/>
</dbReference>
<dbReference type="GO" id="GO:0051219">
    <property type="term" value="F:phosphoprotein binding"/>
    <property type="evidence" value="ECO:0000353"/>
    <property type="project" value="RGD"/>
</dbReference>
<dbReference type="GO" id="GO:0001784">
    <property type="term" value="F:phosphotyrosine residue binding"/>
    <property type="evidence" value="ECO:0000353"/>
    <property type="project" value="RGD"/>
</dbReference>
<dbReference type="GO" id="GO:0019904">
    <property type="term" value="F:protein domain specific binding"/>
    <property type="evidence" value="ECO:0000353"/>
    <property type="project" value="RGD"/>
</dbReference>
<dbReference type="GO" id="GO:0019901">
    <property type="term" value="F:protein kinase binding"/>
    <property type="evidence" value="ECO:0000266"/>
    <property type="project" value="RGD"/>
</dbReference>
<dbReference type="GO" id="GO:0019903">
    <property type="term" value="F:protein phosphatase binding"/>
    <property type="evidence" value="ECO:0000266"/>
    <property type="project" value="RGD"/>
</dbReference>
<dbReference type="GO" id="GO:0044877">
    <property type="term" value="F:protein-containing complex binding"/>
    <property type="evidence" value="ECO:0000314"/>
    <property type="project" value="RGD"/>
</dbReference>
<dbReference type="GO" id="GO:0030674">
    <property type="term" value="F:protein-macromolecule adaptor activity"/>
    <property type="evidence" value="ECO:0000266"/>
    <property type="project" value="RGD"/>
</dbReference>
<dbReference type="GO" id="GO:0017124">
    <property type="term" value="F:SH3 domain binding"/>
    <property type="evidence" value="ECO:0000250"/>
    <property type="project" value="UniProtKB"/>
</dbReference>
<dbReference type="GO" id="GO:0005068">
    <property type="term" value="F:transmembrane receptor protein tyrosine kinase adaptor activity"/>
    <property type="evidence" value="ECO:0000266"/>
    <property type="project" value="RGD"/>
</dbReference>
<dbReference type="GO" id="GO:0030036">
    <property type="term" value="P:actin cytoskeleton organization"/>
    <property type="evidence" value="ECO:0000266"/>
    <property type="project" value="RGD"/>
</dbReference>
<dbReference type="GO" id="GO:0048646">
    <property type="term" value="P:anatomical structure formation involved in morphogenesis"/>
    <property type="evidence" value="ECO:0000266"/>
    <property type="project" value="RGD"/>
</dbReference>
<dbReference type="GO" id="GO:0050853">
    <property type="term" value="P:B cell receptor signaling pathway"/>
    <property type="evidence" value="ECO:0000266"/>
    <property type="project" value="RGD"/>
</dbReference>
<dbReference type="GO" id="GO:0060670">
    <property type="term" value="P:branching involved in labyrinthine layer morphogenesis"/>
    <property type="evidence" value="ECO:0000266"/>
    <property type="project" value="RGD"/>
</dbReference>
<dbReference type="GO" id="GO:0071479">
    <property type="term" value="P:cellular response to ionizing radiation"/>
    <property type="evidence" value="ECO:0000266"/>
    <property type="project" value="RGD"/>
</dbReference>
<dbReference type="GO" id="GO:0035987">
    <property type="term" value="P:endodermal cell differentiation"/>
    <property type="evidence" value="ECO:0000266"/>
    <property type="project" value="RGD"/>
</dbReference>
<dbReference type="GO" id="GO:0007173">
    <property type="term" value="P:epidermal growth factor receptor signaling pathway"/>
    <property type="evidence" value="ECO:0000266"/>
    <property type="project" value="RGD"/>
</dbReference>
<dbReference type="GO" id="GO:0008543">
    <property type="term" value="P:fibroblast growth factor receptor signaling pathway"/>
    <property type="evidence" value="ECO:0000266"/>
    <property type="project" value="RGD"/>
</dbReference>
<dbReference type="GO" id="GO:0008286">
    <property type="term" value="P:insulin receptor signaling pathway"/>
    <property type="evidence" value="ECO:0000266"/>
    <property type="project" value="RGD"/>
</dbReference>
<dbReference type="GO" id="GO:0048009">
    <property type="term" value="P:insulin-like growth factor receptor signaling pathway"/>
    <property type="evidence" value="ECO:0000266"/>
    <property type="project" value="RGD"/>
</dbReference>
<dbReference type="GO" id="GO:0042552">
    <property type="term" value="P:myelination"/>
    <property type="evidence" value="ECO:0000266"/>
    <property type="project" value="RGD"/>
</dbReference>
<dbReference type="GO" id="GO:0042267">
    <property type="term" value="P:natural killer cell mediated cytotoxicity"/>
    <property type="evidence" value="ECO:0000266"/>
    <property type="project" value="RGD"/>
</dbReference>
<dbReference type="GO" id="GO:0045953">
    <property type="term" value="P:negative regulation of natural killer cell mediated cytotoxicity"/>
    <property type="evidence" value="ECO:0000266"/>
    <property type="project" value="RGD"/>
</dbReference>
<dbReference type="GO" id="GO:0030838">
    <property type="term" value="P:positive regulation of actin filament polymerization"/>
    <property type="evidence" value="ECO:0000266"/>
    <property type="project" value="RGD"/>
</dbReference>
<dbReference type="GO" id="GO:2000379">
    <property type="term" value="P:positive regulation of reactive oxygen species metabolic process"/>
    <property type="evidence" value="ECO:0000266"/>
    <property type="project" value="RGD"/>
</dbReference>
<dbReference type="GO" id="GO:0007265">
    <property type="term" value="P:Ras protein signal transduction"/>
    <property type="evidence" value="ECO:0000304"/>
    <property type="project" value="RGD"/>
</dbReference>
<dbReference type="GO" id="GO:0031623">
    <property type="term" value="P:receptor internalization"/>
    <property type="evidence" value="ECO:0000266"/>
    <property type="project" value="RGD"/>
</dbReference>
<dbReference type="GO" id="GO:0043408">
    <property type="term" value="P:regulation of MAPK cascade"/>
    <property type="evidence" value="ECO:0000266"/>
    <property type="project" value="RGD"/>
</dbReference>
<dbReference type="GO" id="GO:0014044">
    <property type="term" value="P:Schwann cell development"/>
    <property type="evidence" value="ECO:0000266"/>
    <property type="project" value="RGD"/>
</dbReference>
<dbReference type="GO" id="GO:0007165">
    <property type="term" value="P:signal transduction"/>
    <property type="evidence" value="ECO:0000318"/>
    <property type="project" value="GO_Central"/>
</dbReference>
<dbReference type="GO" id="GO:0042770">
    <property type="term" value="P:signal transduction in response to DNA damage"/>
    <property type="evidence" value="ECO:0000266"/>
    <property type="project" value="RGD"/>
</dbReference>
<dbReference type="GO" id="GO:0042110">
    <property type="term" value="P:T cell activation"/>
    <property type="evidence" value="ECO:0000266"/>
    <property type="project" value="RGD"/>
</dbReference>
<dbReference type="CDD" id="cd09941">
    <property type="entry name" value="SH2_Grb2_like"/>
    <property type="match status" value="1"/>
</dbReference>
<dbReference type="CDD" id="cd11949">
    <property type="entry name" value="SH3_GRB2_C"/>
    <property type="match status" value="1"/>
</dbReference>
<dbReference type="CDD" id="cd11946">
    <property type="entry name" value="SH3_GRB2_N"/>
    <property type="match status" value="1"/>
</dbReference>
<dbReference type="FunFam" id="2.30.30.40:FF:000067">
    <property type="entry name" value="Growth factor receptor-bound protein 2"/>
    <property type="match status" value="1"/>
</dbReference>
<dbReference type="FunFam" id="2.30.30.40:FF:000076">
    <property type="entry name" value="Growth factor receptor-bound protein 2"/>
    <property type="match status" value="1"/>
</dbReference>
<dbReference type="FunFam" id="3.30.505.10:FF:000022">
    <property type="entry name" value="Growth factor receptor-bound protein 2"/>
    <property type="match status" value="1"/>
</dbReference>
<dbReference type="Gene3D" id="3.30.505.10">
    <property type="entry name" value="SH2 domain"/>
    <property type="match status" value="1"/>
</dbReference>
<dbReference type="Gene3D" id="2.30.30.40">
    <property type="entry name" value="SH3 Domains"/>
    <property type="match status" value="2"/>
</dbReference>
<dbReference type="InterPro" id="IPR043539">
    <property type="entry name" value="Grb2-like"/>
</dbReference>
<dbReference type="InterPro" id="IPR035643">
    <property type="entry name" value="GRB2_C_SH3"/>
</dbReference>
<dbReference type="InterPro" id="IPR035641">
    <property type="entry name" value="GRB2_N_SH3"/>
</dbReference>
<dbReference type="InterPro" id="IPR000980">
    <property type="entry name" value="SH2"/>
</dbReference>
<dbReference type="InterPro" id="IPR036860">
    <property type="entry name" value="SH2_dom_sf"/>
</dbReference>
<dbReference type="InterPro" id="IPR036028">
    <property type="entry name" value="SH3-like_dom_sf"/>
</dbReference>
<dbReference type="InterPro" id="IPR001452">
    <property type="entry name" value="SH3_domain"/>
</dbReference>
<dbReference type="PANTHER" id="PTHR46037">
    <property type="entry name" value="PROTEIN ENHANCER OF SEVENLESS 2B"/>
    <property type="match status" value="1"/>
</dbReference>
<dbReference type="Pfam" id="PF00017">
    <property type="entry name" value="SH2"/>
    <property type="match status" value="1"/>
</dbReference>
<dbReference type="Pfam" id="PF00018">
    <property type="entry name" value="SH3_1"/>
    <property type="match status" value="2"/>
</dbReference>
<dbReference type="PRINTS" id="PR00499">
    <property type="entry name" value="P67PHOX"/>
</dbReference>
<dbReference type="PRINTS" id="PR00401">
    <property type="entry name" value="SH2DOMAIN"/>
</dbReference>
<dbReference type="PRINTS" id="PR00452">
    <property type="entry name" value="SH3DOMAIN"/>
</dbReference>
<dbReference type="SMART" id="SM00252">
    <property type="entry name" value="SH2"/>
    <property type="match status" value="1"/>
</dbReference>
<dbReference type="SMART" id="SM00326">
    <property type="entry name" value="SH3"/>
    <property type="match status" value="2"/>
</dbReference>
<dbReference type="SUPFAM" id="SSF55550">
    <property type="entry name" value="SH2 domain"/>
    <property type="match status" value="1"/>
</dbReference>
<dbReference type="SUPFAM" id="SSF50044">
    <property type="entry name" value="SH3-domain"/>
    <property type="match status" value="2"/>
</dbReference>
<dbReference type="PROSITE" id="PS50001">
    <property type="entry name" value="SH2"/>
    <property type="match status" value="1"/>
</dbReference>
<dbReference type="PROSITE" id="PS50002">
    <property type="entry name" value="SH3"/>
    <property type="match status" value="2"/>
</dbReference>
<keyword id="KW-0007">Acetylation</keyword>
<keyword id="KW-0025">Alternative splicing</keyword>
<keyword id="KW-0963">Cytoplasm</keyword>
<keyword id="KW-0903">Direct protein sequencing</keyword>
<keyword id="KW-0967">Endosome</keyword>
<keyword id="KW-0333">Golgi apparatus</keyword>
<keyword id="KW-1017">Isopeptide bond</keyword>
<keyword id="KW-0539">Nucleus</keyword>
<keyword id="KW-0597">Phosphoprotein</keyword>
<keyword id="KW-1185">Reference proteome</keyword>
<keyword id="KW-0677">Repeat</keyword>
<keyword id="KW-0727">SH2 domain</keyword>
<keyword id="KW-0728">SH3 domain</keyword>
<keyword id="KW-0832">Ubl conjugation</keyword>